<dbReference type="EC" id="3.6.5.3" evidence="2"/>
<dbReference type="EMBL" id="AE017355">
    <property type="protein sequence ID" value="AAT61478.1"/>
    <property type="molecule type" value="Genomic_DNA"/>
</dbReference>
<dbReference type="RefSeq" id="WP_001029614.1">
    <property type="nucleotide sequence ID" value="NC_005957.1"/>
</dbReference>
<dbReference type="RefSeq" id="YP_034460.1">
    <property type="nucleotide sequence ID" value="NC_005957.1"/>
</dbReference>
<dbReference type="SMR" id="Q6HPR0"/>
<dbReference type="GeneID" id="93010945"/>
<dbReference type="KEGG" id="btk:BT9727_0104"/>
<dbReference type="PATRIC" id="fig|281309.8.peg.105"/>
<dbReference type="HOGENOM" id="CLU_007265_0_1_9"/>
<dbReference type="Proteomes" id="UP000001301">
    <property type="component" value="Chromosome"/>
</dbReference>
<dbReference type="GO" id="GO:0005829">
    <property type="term" value="C:cytosol"/>
    <property type="evidence" value="ECO:0007669"/>
    <property type="project" value="TreeGrafter"/>
</dbReference>
<dbReference type="GO" id="GO:0005525">
    <property type="term" value="F:GTP binding"/>
    <property type="evidence" value="ECO:0007669"/>
    <property type="project" value="UniProtKB-UniRule"/>
</dbReference>
<dbReference type="GO" id="GO:0003924">
    <property type="term" value="F:GTPase activity"/>
    <property type="evidence" value="ECO:0007669"/>
    <property type="project" value="InterPro"/>
</dbReference>
<dbReference type="GO" id="GO:0003746">
    <property type="term" value="F:translation elongation factor activity"/>
    <property type="evidence" value="ECO:0007669"/>
    <property type="project" value="UniProtKB-UniRule"/>
</dbReference>
<dbReference type="CDD" id="cd01884">
    <property type="entry name" value="EF_Tu"/>
    <property type="match status" value="1"/>
</dbReference>
<dbReference type="CDD" id="cd03697">
    <property type="entry name" value="EFTU_II"/>
    <property type="match status" value="1"/>
</dbReference>
<dbReference type="CDD" id="cd03707">
    <property type="entry name" value="EFTU_III"/>
    <property type="match status" value="1"/>
</dbReference>
<dbReference type="FunFam" id="2.40.30.10:FF:000001">
    <property type="entry name" value="Elongation factor Tu"/>
    <property type="match status" value="1"/>
</dbReference>
<dbReference type="FunFam" id="3.40.50.300:FF:000003">
    <property type="entry name" value="Elongation factor Tu"/>
    <property type="match status" value="1"/>
</dbReference>
<dbReference type="Gene3D" id="3.40.50.300">
    <property type="entry name" value="P-loop containing nucleotide triphosphate hydrolases"/>
    <property type="match status" value="1"/>
</dbReference>
<dbReference type="Gene3D" id="2.40.30.10">
    <property type="entry name" value="Translation factors"/>
    <property type="match status" value="2"/>
</dbReference>
<dbReference type="HAMAP" id="MF_00118_B">
    <property type="entry name" value="EF_Tu_B"/>
    <property type="match status" value="1"/>
</dbReference>
<dbReference type="InterPro" id="IPR041709">
    <property type="entry name" value="EF-Tu_GTP-bd"/>
</dbReference>
<dbReference type="InterPro" id="IPR050055">
    <property type="entry name" value="EF-Tu_GTPase"/>
</dbReference>
<dbReference type="InterPro" id="IPR004161">
    <property type="entry name" value="EFTu-like_2"/>
</dbReference>
<dbReference type="InterPro" id="IPR033720">
    <property type="entry name" value="EFTU_2"/>
</dbReference>
<dbReference type="InterPro" id="IPR031157">
    <property type="entry name" value="G_TR_CS"/>
</dbReference>
<dbReference type="InterPro" id="IPR027417">
    <property type="entry name" value="P-loop_NTPase"/>
</dbReference>
<dbReference type="InterPro" id="IPR005225">
    <property type="entry name" value="Small_GTP-bd"/>
</dbReference>
<dbReference type="InterPro" id="IPR000795">
    <property type="entry name" value="T_Tr_GTP-bd_dom"/>
</dbReference>
<dbReference type="InterPro" id="IPR009000">
    <property type="entry name" value="Transl_B-barrel_sf"/>
</dbReference>
<dbReference type="InterPro" id="IPR009001">
    <property type="entry name" value="Transl_elong_EF1A/Init_IF2_C"/>
</dbReference>
<dbReference type="InterPro" id="IPR004541">
    <property type="entry name" value="Transl_elong_EFTu/EF1A_bac/org"/>
</dbReference>
<dbReference type="InterPro" id="IPR004160">
    <property type="entry name" value="Transl_elong_EFTu/EF1A_C"/>
</dbReference>
<dbReference type="NCBIfam" id="TIGR00485">
    <property type="entry name" value="EF-Tu"/>
    <property type="match status" value="1"/>
</dbReference>
<dbReference type="NCBIfam" id="NF000766">
    <property type="entry name" value="PRK00049.1"/>
    <property type="match status" value="1"/>
</dbReference>
<dbReference type="NCBIfam" id="NF009372">
    <property type="entry name" value="PRK12735.1"/>
    <property type="match status" value="1"/>
</dbReference>
<dbReference type="NCBIfam" id="NF009373">
    <property type="entry name" value="PRK12736.1"/>
    <property type="match status" value="1"/>
</dbReference>
<dbReference type="NCBIfam" id="TIGR00231">
    <property type="entry name" value="small_GTP"/>
    <property type="match status" value="1"/>
</dbReference>
<dbReference type="PANTHER" id="PTHR43721:SF22">
    <property type="entry name" value="ELONGATION FACTOR TU, MITOCHONDRIAL"/>
    <property type="match status" value="1"/>
</dbReference>
<dbReference type="PANTHER" id="PTHR43721">
    <property type="entry name" value="ELONGATION FACTOR TU-RELATED"/>
    <property type="match status" value="1"/>
</dbReference>
<dbReference type="Pfam" id="PF00009">
    <property type="entry name" value="GTP_EFTU"/>
    <property type="match status" value="1"/>
</dbReference>
<dbReference type="Pfam" id="PF03144">
    <property type="entry name" value="GTP_EFTU_D2"/>
    <property type="match status" value="1"/>
</dbReference>
<dbReference type="Pfam" id="PF03143">
    <property type="entry name" value="GTP_EFTU_D3"/>
    <property type="match status" value="1"/>
</dbReference>
<dbReference type="PRINTS" id="PR00315">
    <property type="entry name" value="ELONGATNFCT"/>
</dbReference>
<dbReference type="SUPFAM" id="SSF50465">
    <property type="entry name" value="EF-Tu/eEF-1alpha/eIF2-gamma C-terminal domain"/>
    <property type="match status" value="1"/>
</dbReference>
<dbReference type="SUPFAM" id="SSF52540">
    <property type="entry name" value="P-loop containing nucleoside triphosphate hydrolases"/>
    <property type="match status" value="1"/>
</dbReference>
<dbReference type="SUPFAM" id="SSF50447">
    <property type="entry name" value="Translation proteins"/>
    <property type="match status" value="1"/>
</dbReference>
<dbReference type="PROSITE" id="PS00301">
    <property type="entry name" value="G_TR_1"/>
    <property type="match status" value="1"/>
</dbReference>
<dbReference type="PROSITE" id="PS51722">
    <property type="entry name" value="G_TR_2"/>
    <property type="match status" value="1"/>
</dbReference>
<protein>
    <recommendedName>
        <fullName evidence="2">Elongation factor Tu</fullName>
        <shortName evidence="2">EF-Tu</shortName>
        <ecNumber evidence="2">3.6.5.3</ecNumber>
    </recommendedName>
</protein>
<name>EFTU_BACHK</name>
<feature type="chain" id="PRO_1000015608" description="Elongation factor Tu">
    <location>
        <begin position="1"/>
        <end position="395"/>
    </location>
</feature>
<feature type="domain" description="tr-type G">
    <location>
        <begin position="10"/>
        <end position="204"/>
    </location>
</feature>
<feature type="region of interest" description="G1" evidence="1">
    <location>
        <begin position="19"/>
        <end position="26"/>
    </location>
</feature>
<feature type="region of interest" description="G2" evidence="1">
    <location>
        <begin position="60"/>
        <end position="64"/>
    </location>
</feature>
<feature type="region of interest" description="G3" evidence="1">
    <location>
        <begin position="81"/>
        <end position="84"/>
    </location>
</feature>
<feature type="region of interest" description="G4" evidence="1">
    <location>
        <begin position="136"/>
        <end position="139"/>
    </location>
</feature>
<feature type="region of interest" description="G5" evidence="1">
    <location>
        <begin position="174"/>
        <end position="176"/>
    </location>
</feature>
<feature type="binding site" evidence="2">
    <location>
        <begin position="19"/>
        <end position="26"/>
    </location>
    <ligand>
        <name>GTP</name>
        <dbReference type="ChEBI" id="CHEBI:37565"/>
    </ligand>
</feature>
<feature type="binding site" evidence="2">
    <location>
        <position position="26"/>
    </location>
    <ligand>
        <name>Mg(2+)</name>
        <dbReference type="ChEBI" id="CHEBI:18420"/>
    </ligand>
</feature>
<feature type="binding site" evidence="2">
    <location>
        <begin position="81"/>
        <end position="85"/>
    </location>
    <ligand>
        <name>GTP</name>
        <dbReference type="ChEBI" id="CHEBI:37565"/>
    </ligand>
</feature>
<feature type="binding site" evidence="2">
    <location>
        <begin position="136"/>
        <end position="139"/>
    </location>
    <ligand>
        <name>GTP</name>
        <dbReference type="ChEBI" id="CHEBI:37565"/>
    </ligand>
</feature>
<evidence type="ECO:0000250" key="1"/>
<evidence type="ECO:0000255" key="2">
    <source>
        <dbReference type="HAMAP-Rule" id="MF_00118"/>
    </source>
</evidence>
<reference key="1">
    <citation type="journal article" date="2006" name="J. Bacteriol.">
        <title>Pathogenomic sequence analysis of Bacillus cereus and Bacillus thuringiensis isolates closely related to Bacillus anthracis.</title>
        <authorList>
            <person name="Han C.S."/>
            <person name="Xie G."/>
            <person name="Challacombe J.F."/>
            <person name="Altherr M.R."/>
            <person name="Bhotika S.S."/>
            <person name="Bruce D."/>
            <person name="Campbell C.S."/>
            <person name="Campbell M.L."/>
            <person name="Chen J."/>
            <person name="Chertkov O."/>
            <person name="Cleland C."/>
            <person name="Dimitrijevic M."/>
            <person name="Doggett N.A."/>
            <person name="Fawcett J.J."/>
            <person name="Glavina T."/>
            <person name="Goodwin L.A."/>
            <person name="Hill K.K."/>
            <person name="Hitchcock P."/>
            <person name="Jackson P.J."/>
            <person name="Keim P."/>
            <person name="Kewalramani A.R."/>
            <person name="Longmire J."/>
            <person name="Lucas S."/>
            <person name="Malfatti S."/>
            <person name="McMurry K."/>
            <person name="Meincke L.J."/>
            <person name="Misra M."/>
            <person name="Moseman B.L."/>
            <person name="Mundt M."/>
            <person name="Munk A.C."/>
            <person name="Okinaka R.T."/>
            <person name="Parson-Quintana B."/>
            <person name="Reilly L.P."/>
            <person name="Richardson P."/>
            <person name="Robinson D.L."/>
            <person name="Rubin E."/>
            <person name="Saunders E."/>
            <person name="Tapia R."/>
            <person name="Tesmer J.G."/>
            <person name="Thayer N."/>
            <person name="Thompson L.S."/>
            <person name="Tice H."/>
            <person name="Ticknor L.O."/>
            <person name="Wills P.L."/>
            <person name="Brettin T.S."/>
            <person name="Gilna P."/>
        </authorList>
    </citation>
    <scope>NUCLEOTIDE SEQUENCE [LARGE SCALE GENOMIC DNA]</scope>
    <source>
        <strain>97-27</strain>
    </source>
</reference>
<organism>
    <name type="scientific">Bacillus thuringiensis subsp. konkukian (strain 97-27)</name>
    <dbReference type="NCBI Taxonomy" id="281309"/>
    <lineage>
        <taxon>Bacteria</taxon>
        <taxon>Bacillati</taxon>
        <taxon>Bacillota</taxon>
        <taxon>Bacilli</taxon>
        <taxon>Bacillales</taxon>
        <taxon>Bacillaceae</taxon>
        <taxon>Bacillus</taxon>
        <taxon>Bacillus cereus group</taxon>
    </lineage>
</organism>
<comment type="function">
    <text evidence="2">GTP hydrolase that promotes the GTP-dependent binding of aminoacyl-tRNA to the A-site of ribosomes during protein biosynthesis.</text>
</comment>
<comment type="catalytic activity">
    <reaction evidence="2">
        <text>GTP + H2O = GDP + phosphate + H(+)</text>
        <dbReference type="Rhea" id="RHEA:19669"/>
        <dbReference type="ChEBI" id="CHEBI:15377"/>
        <dbReference type="ChEBI" id="CHEBI:15378"/>
        <dbReference type="ChEBI" id="CHEBI:37565"/>
        <dbReference type="ChEBI" id="CHEBI:43474"/>
        <dbReference type="ChEBI" id="CHEBI:58189"/>
        <dbReference type="EC" id="3.6.5.3"/>
    </reaction>
    <physiologicalReaction direction="left-to-right" evidence="2">
        <dbReference type="Rhea" id="RHEA:19670"/>
    </physiologicalReaction>
</comment>
<comment type="subunit">
    <text evidence="2">Monomer.</text>
</comment>
<comment type="subcellular location">
    <subcellularLocation>
        <location evidence="2">Cytoplasm</location>
    </subcellularLocation>
</comment>
<comment type="similarity">
    <text evidence="2">Belongs to the TRAFAC class translation factor GTPase superfamily. Classic translation factor GTPase family. EF-Tu/EF-1A subfamily.</text>
</comment>
<gene>
    <name evidence="2" type="primary">tuf</name>
    <name type="ordered locus">BT9727_0104</name>
</gene>
<sequence>MAKAKFERSKPHVNIGTIGHVDHGKTTLTAAITTVLAKAGGAEARGYDQIDAAPEERERGITISTAHVEYETETRHYAHVDCPGHADYVKNMITGAAQMDGGILVVSAADGPMPQTREHILLSRQVGVPYIVVFLNKCDMVDDEELLELVEMEVRDLLSEYGFPGDDIPVIKGSALKALQGEADWEAKIIELMAEVDAYIPTPERETDKPFLMPVEDVFSITGRGTVATGRVERGIVKVGDVVEIIGLAEENASTTVTGVEMFRKLLDQAQAGDNIGALLRGVAREDIQRGQVLAKSGSVKAHAKFKAEVFVLSKEEGGRHTPFFANYRPQFYFRTTDVTGIIQLPEGTEMVMPGDNIEMTIELIAPIAIEEGTKFSIREGGRTVGYGVVATIVE</sequence>
<keyword id="KW-0963">Cytoplasm</keyword>
<keyword id="KW-0251">Elongation factor</keyword>
<keyword id="KW-0342">GTP-binding</keyword>
<keyword id="KW-0378">Hydrolase</keyword>
<keyword id="KW-0460">Magnesium</keyword>
<keyword id="KW-0479">Metal-binding</keyword>
<keyword id="KW-0547">Nucleotide-binding</keyword>
<keyword id="KW-0648">Protein biosynthesis</keyword>
<accession>Q6HPR0</accession>
<proteinExistence type="inferred from homology"/>